<gene>
    <name evidence="1" type="primary">dapD</name>
    <name type="ordered locus">STY0236</name>
    <name type="ordered locus">t0214</name>
</gene>
<reference key="1">
    <citation type="journal article" date="2001" name="Nature">
        <title>Complete genome sequence of a multiple drug resistant Salmonella enterica serovar Typhi CT18.</title>
        <authorList>
            <person name="Parkhill J."/>
            <person name="Dougan G."/>
            <person name="James K.D."/>
            <person name="Thomson N.R."/>
            <person name="Pickard D."/>
            <person name="Wain J."/>
            <person name="Churcher C.M."/>
            <person name="Mungall K.L."/>
            <person name="Bentley S.D."/>
            <person name="Holden M.T.G."/>
            <person name="Sebaihia M."/>
            <person name="Baker S."/>
            <person name="Basham D."/>
            <person name="Brooks K."/>
            <person name="Chillingworth T."/>
            <person name="Connerton P."/>
            <person name="Cronin A."/>
            <person name="Davis P."/>
            <person name="Davies R.M."/>
            <person name="Dowd L."/>
            <person name="White N."/>
            <person name="Farrar J."/>
            <person name="Feltwell T."/>
            <person name="Hamlin N."/>
            <person name="Haque A."/>
            <person name="Hien T.T."/>
            <person name="Holroyd S."/>
            <person name="Jagels K."/>
            <person name="Krogh A."/>
            <person name="Larsen T.S."/>
            <person name="Leather S."/>
            <person name="Moule S."/>
            <person name="O'Gaora P."/>
            <person name="Parry C."/>
            <person name="Quail M.A."/>
            <person name="Rutherford K.M."/>
            <person name="Simmonds M."/>
            <person name="Skelton J."/>
            <person name="Stevens K."/>
            <person name="Whitehead S."/>
            <person name="Barrell B.G."/>
        </authorList>
    </citation>
    <scope>NUCLEOTIDE SEQUENCE [LARGE SCALE GENOMIC DNA]</scope>
    <source>
        <strain>CT18</strain>
    </source>
</reference>
<reference key="2">
    <citation type="journal article" date="2003" name="J. Bacteriol.">
        <title>Comparative genomics of Salmonella enterica serovar Typhi strains Ty2 and CT18.</title>
        <authorList>
            <person name="Deng W."/>
            <person name="Liou S.-R."/>
            <person name="Plunkett G. III"/>
            <person name="Mayhew G.F."/>
            <person name="Rose D.J."/>
            <person name="Burland V."/>
            <person name="Kodoyianni V."/>
            <person name="Schwartz D.C."/>
            <person name="Blattner F.R."/>
        </authorList>
    </citation>
    <scope>NUCLEOTIDE SEQUENCE [LARGE SCALE GENOMIC DNA]</scope>
    <source>
        <strain>ATCC 700931 / Ty2</strain>
    </source>
</reference>
<sequence length="274" mass="29838">MQQLQNVIETAFERRADITPANVDTVTREAVKQVISLLDSGALRVAEKIDGQWVTHQWLKKAVLLSFRINDNQVIDGAESRYFDKAPMKFADYDEARFQKEGFRVVPPAAVRQGAFIARNTVLMPSYVNIGAYVDEGTMVDTWATVGSCAQIGKNVHLSGGVGIGGVLEPLQANPTIIEDNCFIGARSEVVEGVIVEEGSVISMGVYLGQSTKIYDRETGEVHYGRVPAGSVVVSGNLPSKDGKYSLYCAVIVKKVDAKTRGKVGINELLRTID</sequence>
<comment type="catalytic activity">
    <reaction evidence="1">
        <text>(S)-2,3,4,5-tetrahydrodipicolinate + succinyl-CoA + H2O = (S)-2-succinylamino-6-oxoheptanedioate + CoA</text>
        <dbReference type="Rhea" id="RHEA:17325"/>
        <dbReference type="ChEBI" id="CHEBI:15377"/>
        <dbReference type="ChEBI" id="CHEBI:15685"/>
        <dbReference type="ChEBI" id="CHEBI:16845"/>
        <dbReference type="ChEBI" id="CHEBI:57287"/>
        <dbReference type="ChEBI" id="CHEBI:57292"/>
        <dbReference type="EC" id="2.3.1.117"/>
    </reaction>
</comment>
<comment type="pathway">
    <text evidence="1">Amino-acid biosynthesis; L-lysine biosynthesis via DAP pathway; LL-2,6-diaminopimelate from (S)-tetrahydrodipicolinate (succinylase route): step 1/3.</text>
</comment>
<comment type="subunit">
    <text evidence="1">Homotrimer.</text>
</comment>
<comment type="subcellular location">
    <subcellularLocation>
        <location evidence="1">Cytoplasm</location>
    </subcellularLocation>
</comment>
<comment type="similarity">
    <text evidence="1">Belongs to the transferase hexapeptide repeat family.</text>
</comment>
<dbReference type="EC" id="2.3.1.117" evidence="1"/>
<dbReference type="EMBL" id="AL513382">
    <property type="protein sequence ID" value="CAD01367.1"/>
    <property type="molecule type" value="Genomic_DNA"/>
</dbReference>
<dbReference type="EMBL" id="AE014613">
    <property type="protein sequence ID" value="AAO67944.1"/>
    <property type="molecule type" value="Genomic_DNA"/>
</dbReference>
<dbReference type="RefSeq" id="NP_454820.1">
    <property type="nucleotide sequence ID" value="NC_003198.1"/>
</dbReference>
<dbReference type="RefSeq" id="WP_001186669.1">
    <property type="nucleotide sequence ID" value="NZ_WSUR01000009.1"/>
</dbReference>
<dbReference type="SMR" id="Q8Z9A8"/>
<dbReference type="STRING" id="220341.gene:17584269"/>
<dbReference type="KEGG" id="stt:t0214"/>
<dbReference type="KEGG" id="sty:STY0236"/>
<dbReference type="PATRIC" id="fig|220341.7.peg.236"/>
<dbReference type="eggNOG" id="COG2171">
    <property type="taxonomic scope" value="Bacteria"/>
</dbReference>
<dbReference type="HOGENOM" id="CLU_050859_0_1_6"/>
<dbReference type="OMA" id="YFPIQKM"/>
<dbReference type="OrthoDB" id="9775362at2"/>
<dbReference type="UniPathway" id="UPA00034">
    <property type="reaction ID" value="UER00019"/>
</dbReference>
<dbReference type="Proteomes" id="UP000000541">
    <property type="component" value="Chromosome"/>
</dbReference>
<dbReference type="Proteomes" id="UP000002670">
    <property type="component" value="Chromosome"/>
</dbReference>
<dbReference type="GO" id="GO:0005737">
    <property type="term" value="C:cytoplasm"/>
    <property type="evidence" value="ECO:0007669"/>
    <property type="project" value="UniProtKB-SubCell"/>
</dbReference>
<dbReference type="GO" id="GO:0008666">
    <property type="term" value="F:2,3,4,5-tetrahydropyridine-2,6-dicarboxylate N-succinyltransferase activity"/>
    <property type="evidence" value="ECO:0007669"/>
    <property type="project" value="UniProtKB-UniRule"/>
</dbReference>
<dbReference type="GO" id="GO:0016779">
    <property type="term" value="F:nucleotidyltransferase activity"/>
    <property type="evidence" value="ECO:0007669"/>
    <property type="project" value="TreeGrafter"/>
</dbReference>
<dbReference type="GO" id="GO:0019877">
    <property type="term" value="P:diaminopimelate biosynthetic process"/>
    <property type="evidence" value="ECO:0007669"/>
    <property type="project" value="UniProtKB-UniRule"/>
</dbReference>
<dbReference type="GO" id="GO:0009089">
    <property type="term" value="P:lysine biosynthetic process via diaminopimelate"/>
    <property type="evidence" value="ECO:0007669"/>
    <property type="project" value="UniProtKB-UniRule"/>
</dbReference>
<dbReference type="CDD" id="cd03350">
    <property type="entry name" value="LbH_THP_succinylT"/>
    <property type="match status" value="1"/>
</dbReference>
<dbReference type="FunFam" id="2.160.10.10:FF:000004">
    <property type="entry name" value="2,3,4,5-tetrahydropyridine-2,6-dicarboxylate N-succinyltransferase"/>
    <property type="match status" value="1"/>
</dbReference>
<dbReference type="Gene3D" id="2.160.10.10">
    <property type="entry name" value="Hexapeptide repeat proteins"/>
    <property type="match status" value="1"/>
</dbReference>
<dbReference type="Gene3D" id="1.10.166.10">
    <property type="entry name" value="Tetrahydrodipicolinate-N-succinyltransferase, N-terminal domain"/>
    <property type="match status" value="1"/>
</dbReference>
<dbReference type="HAMAP" id="MF_00811">
    <property type="entry name" value="DapD"/>
    <property type="match status" value="1"/>
</dbReference>
<dbReference type="InterPro" id="IPR005664">
    <property type="entry name" value="DapD_Trfase_Hexpep_rpt_fam"/>
</dbReference>
<dbReference type="InterPro" id="IPR001451">
    <property type="entry name" value="Hexapep"/>
</dbReference>
<dbReference type="InterPro" id="IPR018357">
    <property type="entry name" value="Hexapep_transf_CS"/>
</dbReference>
<dbReference type="InterPro" id="IPR023180">
    <property type="entry name" value="THP_succinylTrfase_dom1"/>
</dbReference>
<dbReference type="InterPro" id="IPR037133">
    <property type="entry name" value="THP_succinylTrfase_N_sf"/>
</dbReference>
<dbReference type="InterPro" id="IPR011004">
    <property type="entry name" value="Trimer_LpxA-like_sf"/>
</dbReference>
<dbReference type="NCBIfam" id="TIGR00965">
    <property type="entry name" value="dapD"/>
    <property type="match status" value="1"/>
</dbReference>
<dbReference type="NCBIfam" id="NF008808">
    <property type="entry name" value="PRK11830.1"/>
    <property type="match status" value="1"/>
</dbReference>
<dbReference type="PANTHER" id="PTHR19136:SF52">
    <property type="entry name" value="2,3,4,5-TETRAHYDROPYRIDINE-2,6-DICARBOXYLATE N-SUCCINYLTRANSFERASE"/>
    <property type="match status" value="1"/>
</dbReference>
<dbReference type="PANTHER" id="PTHR19136">
    <property type="entry name" value="MOLYBDENUM COFACTOR GUANYLYLTRANSFERASE"/>
    <property type="match status" value="1"/>
</dbReference>
<dbReference type="Pfam" id="PF14602">
    <property type="entry name" value="Hexapep_2"/>
    <property type="match status" value="1"/>
</dbReference>
<dbReference type="Pfam" id="PF14805">
    <property type="entry name" value="THDPS_N_2"/>
    <property type="match status" value="1"/>
</dbReference>
<dbReference type="SUPFAM" id="SSF51161">
    <property type="entry name" value="Trimeric LpxA-like enzymes"/>
    <property type="match status" value="1"/>
</dbReference>
<dbReference type="PROSITE" id="PS00101">
    <property type="entry name" value="HEXAPEP_TRANSFERASES"/>
    <property type="match status" value="1"/>
</dbReference>
<keyword id="KW-0012">Acyltransferase</keyword>
<keyword id="KW-0028">Amino-acid biosynthesis</keyword>
<keyword id="KW-0963">Cytoplasm</keyword>
<keyword id="KW-0220">Diaminopimelate biosynthesis</keyword>
<keyword id="KW-0457">Lysine biosynthesis</keyword>
<keyword id="KW-0677">Repeat</keyword>
<keyword id="KW-0808">Transferase</keyword>
<feature type="chain" id="PRO_0000196968" description="2,3,4,5-tetrahydropyridine-2,6-dicarboxylate N-succinyltransferase">
    <location>
        <begin position="1"/>
        <end position="274"/>
    </location>
</feature>
<feature type="binding site" evidence="1">
    <location>
        <position position="104"/>
    </location>
    <ligand>
        <name>substrate</name>
    </ligand>
</feature>
<feature type="binding site" evidence="1">
    <location>
        <position position="141"/>
    </location>
    <ligand>
        <name>substrate</name>
    </ligand>
</feature>
<name>DAPD_SALTI</name>
<accession>Q8Z9A8</accession>
<accession>Q7CBQ0</accession>
<evidence type="ECO:0000255" key="1">
    <source>
        <dbReference type="HAMAP-Rule" id="MF_00811"/>
    </source>
</evidence>
<protein>
    <recommendedName>
        <fullName evidence="1">2,3,4,5-tetrahydropyridine-2,6-dicarboxylate N-succinyltransferase</fullName>
        <ecNumber evidence="1">2.3.1.117</ecNumber>
    </recommendedName>
    <alternativeName>
        <fullName evidence="1">Tetrahydrodipicolinate N-succinyltransferase</fullName>
        <shortName evidence="1">THDP succinyltransferase</shortName>
        <shortName evidence="1">THP succinyltransferase</shortName>
        <shortName evidence="1">Tetrahydropicolinate succinylase</shortName>
    </alternativeName>
</protein>
<proteinExistence type="inferred from homology"/>
<organism>
    <name type="scientific">Salmonella typhi</name>
    <dbReference type="NCBI Taxonomy" id="90370"/>
    <lineage>
        <taxon>Bacteria</taxon>
        <taxon>Pseudomonadati</taxon>
        <taxon>Pseudomonadota</taxon>
        <taxon>Gammaproteobacteria</taxon>
        <taxon>Enterobacterales</taxon>
        <taxon>Enterobacteriaceae</taxon>
        <taxon>Salmonella</taxon>
    </lineage>
</organism>